<name>SYM_YERPA</name>
<evidence type="ECO:0000255" key="1">
    <source>
        <dbReference type="HAMAP-Rule" id="MF_00098"/>
    </source>
</evidence>
<reference key="1">
    <citation type="journal article" date="2006" name="J. Bacteriol.">
        <title>Complete genome sequence of Yersinia pestis strains Antiqua and Nepal516: evidence of gene reduction in an emerging pathogen.</title>
        <authorList>
            <person name="Chain P.S.G."/>
            <person name="Hu P."/>
            <person name="Malfatti S.A."/>
            <person name="Radnedge L."/>
            <person name="Larimer F."/>
            <person name="Vergez L.M."/>
            <person name="Worsham P."/>
            <person name="Chu M.C."/>
            <person name="Andersen G.L."/>
        </authorList>
    </citation>
    <scope>NUCLEOTIDE SEQUENCE [LARGE SCALE GENOMIC DNA]</scope>
    <source>
        <strain>Antiqua</strain>
    </source>
</reference>
<gene>
    <name evidence="1" type="primary">metG</name>
    <name type="ordered locus">YPA_0816</name>
</gene>
<protein>
    <recommendedName>
        <fullName evidence="1">Methionine--tRNA ligase</fullName>
        <ecNumber evidence="1">6.1.1.10</ecNumber>
    </recommendedName>
    <alternativeName>
        <fullName evidence="1">Methionyl-tRNA synthetase</fullName>
        <shortName evidence="1">MetRS</shortName>
    </alternativeName>
</protein>
<proteinExistence type="inferred from homology"/>
<organism>
    <name type="scientific">Yersinia pestis bv. Antiqua (strain Antiqua)</name>
    <dbReference type="NCBI Taxonomy" id="360102"/>
    <lineage>
        <taxon>Bacteria</taxon>
        <taxon>Pseudomonadati</taxon>
        <taxon>Pseudomonadota</taxon>
        <taxon>Gammaproteobacteria</taxon>
        <taxon>Enterobacterales</taxon>
        <taxon>Yersiniaceae</taxon>
        <taxon>Yersinia</taxon>
    </lineage>
</organism>
<keyword id="KW-0030">Aminoacyl-tRNA synthetase</keyword>
<keyword id="KW-0067">ATP-binding</keyword>
<keyword id="KW-0963">Cytoplasm</keyword>
<keyword id="KW-0436">Ligase</keyword>
<keyword id="KW-0479">Metal-binding</keyword>
<keyword id="KW-0547">Nucleotide-binding</keyword>
<keyword id="KW-0648">Protein biosynthesis</keyword>
<keyword id="KW-0694">RNA-binding</keyword>
<keyword id="KW-0820">tRNA-binding</keyword>
<keyword id="KW-0862">Zinc</keyword>
<dbReference type="EC" id="6.1.1.10" evidence="1"/>
<dbReference type="EMBL" id="CP000308">
    <property type="protein sequence ID" value="ABG12784.1"/>
    <property type="molecule type" value="Genomic_DNA"/>
</dbReference>
<dbReference type="RefSeq" id="WP_002211870.1">
    <property type="nucleotide sequence ID" value="NZ_CP009906.1"/>
</dbReference>
<dbReference type="SMR" id="Q1C9T8"/>
<dbReference type="GeneID" id="57977046"/>
<dbReference type="KEGG" id="ypa:YPA_0816"/>
<dbReference type="Proteomes" id="UP000001971">
    <property type="component" value="Chromosome"/>
</dbReference>
<dbReference type="GO" id="GO:0005829">
    <property type="term" value="C:cytosol"/>
    <property type="evidence" value="ECO:0007669"/>
    <property type="project" value="TreeGrafter"/>
</dbReference>
<dbReference type="GO" id="GO:0005524">
    <property type="term" value="F:ATP binding"/>
    <property type="evidence" value="ECO:0007669"/>
    <property type="project" value="UniProtKB-UniRule"/>
</dbReference>
<dbReference type="GO" id="GO:0046872">
    <property type="term" value="F:metal ion binding"/>
    <property type="evidence" value="ECO:0007669"/>
    <property type="project" value="UniProtKB-KW"/>
</dbReference>
<dbReference type="GO" id="GO:0004825">
    <property type="term" value="F:methionine-tRNA ligase activity"/>
    <property type="evidence" value="ECO:0007669"/>
    <property type="project" value="UniProtKB-UniRule"/>
</dbReference>
<dbReference type="GO" id="GO:0000049">
    <property type="term" value="F:tRNA binding"/>
    <property type="evidence" value="ECO:0007669"/>
    <property type="project" value="UniProtKB-KW"/>
</dbReference>
<dbReference type="GO" id="GO:0006431">
    <property type="term" value="P:methionyl-tRNA aminoacylation"/>
    <property type="evidence" value="ECO:0007669"/>
    <property type="project" value="UniProtKB-UniRule"/>
</dbReference>
<dbReference type="CDD" id="cd07957">
    <property type="entry name" value="Anticodon_Ia_Met"/>
    <property type="match status" value="1"/>
</dbReference>
<dbReference type="CDD" id="cd00814">
    <property type="entry name" value="MetRS_core"/>
    <property type="match status" value="1"/>
</dbReference>
<dbReference type="CDD" id="cd02800">
    <property type="entry name" value="tRNA_bind_EcMetRS_like"/>
    <property type="match status" value="1"/>
</dbReference>
<dbReference type="FunFam" id="1.10.730.10:FF:000005">
    <property type="entry name" value="Methionine--tRNA ligase"/>
    <property type="match status" value="1"/>
</dbReference>
<dbReference type="FunFam" id="2.20.28.20:FF:000001">
    <property type="entry name" value="Methionine--tRNA ligase"/>
    <property type="match status" value="1"/>
</dbReference>
<dbReference type="FunFam" id="2.40.50.140:FF:000042">
    <property type="entry name" value="Methionine--tRNA ligase"/>
    <property type="match status" value="1"/>
</dbReference>
<dbReference type="Gene3D" id="3.40.50.620">
    <property type="entry name" value="HUPs"/>
    <property type="match status" value="1"/>
</dbReference>
<dbReference type="Gene3D" id="1.10.730.10">
    <property type="entry name" value="Isoleucyl-tRNA Synthetase, Domain 1"/>
    <property type="match status" value="1"/>
</dbReference>
<dbReference type="Gene3D" id="2.20.28.20">
    <property type="entry name" value="Methionyl-tRNA synthetase, Zn-domain"/>
    <property type="match status" value="1"/>
</dbReference>
<dbReference type="Gene3D" id="2.40.50.140">
    <property type="entry name" value="Nucleic acid-binding proteins"/>
    <property type="match status" value="1"/>
</dbReference>
<dbReference type="HAMAP" id="MF_00098">
    <property type="entry name" value="Met_tRNA_synth_type1"/>
    <property type="match status" value="1"/>
</dbReference>
<dbReference type="InterPro" id="IPR001412">
    <property type="entry name" value="aa-tRNA-synth_I_CS"/>
</dbReference>
<dbReference type="InterPro" id="IPR041872">
    <property type="entry name" value="Anticodon_Met"/>
</dbReference>
<dbReference type="InterPro" id="IPR004495">
    <property type="entry name" value="Met-tRNA-synth_bsu_C"/>
</dbReference>
<dbReference type="InterPro" id="IPR023458">
    <property type="entry name" value="Met-tRNA_ligase_1"/>
</dbReference>
<dbReference type="InterPro" id="IPR014758">
    <property type="entry name" value="Met-tRNA_synth"/>
</dbReference>
<dbReference type="InterPro" id="IPR015413">
    <property type="entry name" value="Methionyl/Leucyl_tRNA_Synth"/>
</dbReference>
<dbReference type="InterPro" id="IPR033911">
    <property type="entry name" value="MetRS_core"/>
</dbReference>
<dbReference type="InterPro" id="IPR029038">
    <property type="entry name" value="MetRS_Zn"/>
</dbReference>
<dbReference type="InterPro" id="IPR012340">
    <property type="entry name" value="NA-bd_OB-fold"/>
</dbReference>
<dbReference type="InterPro" id="IPR014729">
    <property type="entry name" value="Rossmann-like_a/b/a_fold"/>
</dbReference>
<dbReference type="InterPro" id="IPR002547">
    <property type="entry name" value="tRNA-bd_dom"/>
</dbReference>
<dbReference type="InterPro" id="IPR009080">
    <property type="entry name" value="tRNAsynth_Ia_anticodon-bd"/>
</dbReference>
<dbReference type="NCBIfam" id="TIGR00398">
    <property type="entry name" value="metG"/>
    <property type="match status" value="1"/>
</dbReference>
<dbReference type="NCBIfam" id="TIGR00399">
    <property type="entry name" value="metG_C_term"/>
    <property type="match status" value="1"/>
</dbReference>
<dbReference type="NCBIfam" id="NF001100">
    <property type="entry name" value="PRK00133.1"/>
    <property type="match status" value="1"/>
</dbReference>
<dbReference type="PANTHER" id="PTHR45765">
    <property type="entry name" value="METHIONINE--TRNA LIGASE"/>
    <property type="match status" value="1"/>
</dbReference>
<dbReference type="PANTHER" id="PTHR45765:SF1">
    <property type="entry name" value="METHIONINE--TRNA LIGASE, CYTOPLASMIC"/>
    <property type="match status" value="1"/>
</dbReference>
<dbReference type="Pfam" id="PF19303">
    <property type="entry name" value="Anticodon_3"/>
    <property type="match status" value="1"/>
</dbReference>
<dbReference type="Pfam" id="PF09334">
    <property type="entry name" value="tRNA-synt_1g"/>
    <property type="match status" value="1"/>
</dbReference>
<dbReference type="Pfam" id="PF01588">
    <property type="entry name" value="tRNA_bind"/>
    <property type="match status" value="1"/>
</dbReference>
<dbReference type="PRINTS" id="PR01041">
    <property type="entry name" value="TRNASYNTHMET"/>
</dbReference>
<dbReference type="SUPFAM" id="SSF47323">
    <property type="entry name" value="Anticodon-binding domain of a subclass of class I aminoacyl-tRNA synthetases"/>
    <property type="match status" value="1"/>
</dbReference>
<dbReference type="SUPFAM" id="SSF57770">
    <property type="entry name" value="Methionyl-tRNA synthetase (MetRS), Zn-domain"/>
    <property type="match status" value="1"/>
</dbReference>
<dbReference type="SUPFAM" id="SSF50249">
    <property type="entry name" value="Nucleic acid-binding proteins"/>
    <property type="match status" value="1"/>
</dbReference>
<dbReference type="SUPFAM" id="SSF52374">
    <property type="entry name" value="Nucleotidylyl transferase"/>
    <property type="match status" value="1"/>
</dbReference>
<dbReference type="PROSITE" id="PS00178">
    <property type="entry name" value="AA_TRNA_LIGASE_I"/>
    <property type="match status" value="1"/>
</dbReference>
<dbReference type="PROSITE" id="PS50886">
    <property type="entry name" value="TRBD"/>
    <property type="match status" value="1"/>
</dbReference>
<comment type="function">
    <text evidence="1">Is required not only for elongation of protein synthesis but also for the initiation of all mRNA translation through initiator tRNA(fMet) aminoacylation.</text>
</comment>
<comment type="catalytic activity">
    <reaction evidence="1">
        <text>tRNA(Met) + L-methionine + ATP = L-methionyl-tRNA(Met) + AMP + diphosphate</text>
        <dbReference type="Rhea" id="RHEA:13481"/>
        <dbReference type="Rhea" id="RHEA-COMP:9667"/>
        <dbReference type="Rhea" id="RHEA-COMP:9698"/>
        <dbReference type="ChEBI" id="CHEBI:30616"/>
        <dbReference type="ChEBI" id="CHEBI:33019"/>
        <dbReference type="ChEBI" id="CHEBI:57844"/>
        <dbReference type="ChEBI" id="CHEBI:78442"/>
        <dbReference type="ChEBI" id="CHEBI:78530"/>
        <dbReference type="ChEBI" id="CHEBI:456215"/>
        <dbReference type="EC" id="6.1.1.10"/>
    </reaction>
</comment>
<comment type="cofactor">
    <cofactor evidence="1">
        <name>Zn(2+)</name>
        <dbReference type="ChEBI" id="CHEBI:29105"/>
    </cofactor>
    <text evidence="1">Binds 1 zinc ion per subunit.</text>
</comment>
<comment type="subunit">
    <text evidence="1">Homodimer.</text>
</comment>
<comment type="subcellular location">
    <subcellularLocation>
        <location evidence="1">Cytoplasm</location>
    </subcellularLocation>
</comment>
<comment type="similarity">
    <text evidence="1">Belongs to the class-I aminoacyl-tRNA synthetase family. MetG type 1 subfamily.</text>
</comment>
<sequence>MAQVAKKILVTCALPYANGSIHLGHMLEHIQADIWVRFQRMRGNQVHFICADDAHGTPIMLKAQQMGIEPEQMIAEMSQEHQQDFAGFAISYDNYHSTHSDENRELSSLIYGRLKANGYIKNRTISQLYDPEKGMFLPDRFVKGTCPKCKAPEQYGDNCEVCGATYSPTELIDPKSAVSGATPVMRESEHFFFDLPAFSDMLQAWTRSGALQEQVANKMQEWFDSGLQQWDITRDAPYFGFEVPDAPGKYFYVWLDAPIGYMGAFKNLCDKRGDLDFDEFWGKDAKTDLYHFIGKDIVYFHSLFWPAMLEGSNFRKPTNLFVHGYVTVNGAKMSKSRGTFIKAGTYLKYLDADCLRYYYAAKLSSRIDDIDLNLEDFVQRVNADIVNKVVNLASRNAGFINKRFAGQLADQLADPVLYKTFTDAATSIADAYNNRESGKAIREIMALADVANRYVDEQAPWVVAKQEGRDADLHAICSMGINLFRVLMTYLKPVLPSLTERTEAFLNTELTWDSIEQPLLGHSITAFKALFNRIDLDKVNEMVASSKEDMAPATRVTGPLADDPIQETISFDDFAKVDMRIALIQQAEFVEGSDKLLKLTLELGGETRQVFSGIRSAYPDPKALEGRMTVMVANLAPRKMRFGVSEGMVMAAGPGGSDIFLLSPDSGAQPGMQVK</sequence>
<feature type="chain" id="PRO_0000331931" description="Methionine--tRNA ligase">
    <location>
        <begin position="1"/>
        <end position="675"/>
    </location>
</feature>
<feature type="domain" description="tRNA-binding" evidence="1">
    <location>
        <begin position="573"/>
        <end position="675"/>
    </location>
</feature>
<feature type="short sequence motif" description="'HIGH' region">
    <location>
        <begin position="15"/>
        <end position="25"/>
    </location>
</feature>
<feature type="short sequence motif" description="'KMSKS' region">
    <location>
        <begin position="332"/>
        <end position="336"/>
    </location>
</feature>
<feature type="binding site" evidence="1">
    <location>
        <position position="146"/>
    </location>
    <ligand>
        <name>Zn(2+)</name>
        <dbReference type="ChEBI" id="CHEBI:29105"/>
    </ligand>
</feature>
<feature type="binding site" evidence="1">
    <location>
        <position position="149"/>
    </location>
    <ligand>
        <name>Zn(2+)</name>
        <dbReference type="ChEBI" id="CHEBI:29105"/>
    </ligand>
</feature>
<feature type="binding site" evidence="1">
    <location>
        <position position="159"/>
    </location>
    <ligand>
        <name>Zn(2+)</name>
        <dbReference type="ChEBI" id="CHEBI:29105"/>
    </ligand>
</feature>
<feature type="binding site" evidence="1">
    <location>
        <position position="162"/>
    </location>
    <ligand>
        <name>Zn(2+)</name>
        <dbReference type="ChEBI" id="CHEBI:29105"/>
    </ligand>
</feature>
<feature type="binding site" evidence="1">
    <location>
        <position position="335"/>
    </location>
    <ligand>
        <name>ATP</name>
        <dbReference type="ChEBI" id="CHEBI:30616"/>
    </ligand>
</feature>
<accession>Q1C9T8</accession>